<protein>
    <recommendedName>
        <fullName evidence="1">UvrABC system protein C</fullName>
        <shortName evidence="1">Protein UvrC</shortName>
    </recommendedName>
    <alternativeName>
        <fullName evidence="1">Excinuclease ABC subunit C</fullName>
    </alternativeName>
</protein>
<organism>
    <name type="scientific">Staphylococcus aureus (strain MW2)</name>
    <dbReference type="NCBI Taxonomy" id="196620"/>
    <lineage>
        <taxon>Bacteria</taxon>
        <taxon>Bacillati</taxon>
        <taxon>Bacillota</taxon>
        <taxon>Bacilli</taxon>
        <taxon>Bacillales</taxon>
        <taxon>Staphylococcaceae</taxon>
        <taxon>Staphylococcus</taxon>
    </lineage>
</organism>
<reference key="1">
    <citation type="journal article" date="2002" name="Lancet">
        <title>Genome and virulence determinants of high virulence community-acquired MRSA.</title>
        <authorList>
            <person name="Baba T."/>
            <person name="Takeuchi F."/>
            <person name="Kuroda M."/>
            <person name="Yuzawa H."/>
            <person name="Aoki K."/>
            <person name="Oguchi A."/>
            <person name="Nagai Y."/>
            <person name="Iwama N."/>
            <person name="Asano K."/>
            <person name="Naimi T."/>
            <person name="Kuroda H."/>
            <person name="Cui L."/>
            <person name="Yamamoto K."/>
            <person name="Hiramatsu K."/>
        </authorList>
    </citation>
    <scope>NUCLEOTIDE SEQUENCE [LARGE SCALE GENOMIC DNA]</scope>
    <source>
        <strain>MW2</strain>
    </source>
</reference>
<comment type="function">
    <text evidence="1">The UvrABC repair system catalyzes the recognition and processing of DNA lesions. UvrC both incises the 5' and 3' sides of the lesion. The N-terminal half is responsible for the 3' incision and the C-terminal half is responsible for the 5' incision.</text>
</comment>
<comment type="subunit">
    <text evidence="1">Interacts with UvrB in an incision complex.</text>
</comment>
<comment type="subcellular location">
    <subcellularLocation>
        <location evidence="1">Cytoplasm</location>
    </subcellularLocation>
</comment>
<comment type="similarity">
    <text evidence="1">Belongs to the UvrC family.</text>
</comment>
<accession>Q8NX55</accession>
<dbReference type="EMBL" id="BA000033">
    <property type="protein sequence ID" value="BAB94894.1"/>
    <property type="molecule type" value="Genomic_DNA"/>
</dbReference>
<dbReference type="RefSeq" id="WP_000390525.1">
    <property type="nucleotide sequence ID" value="NC_003923.1"/>
</dbReference>
<dbReference type="SMR" id="Q8NX55"/>
<dbReference type="KEGG" id="sam:MW1029"/>
<dbReference type="HOGENOM" id="CLU_014841_3_2_9"/>
<dbReference type="GO" id="GO:0005737">
    <property type="term" value="C:cytoplasm"/>
    <property type="evidence" value="ECO:0007669"/>
    <property type="project" value="UniProtKB-SubCell"/>
</dbReference>
<dbReference type="GO" id="GO:0009380">
    <property type="term" value="C:excinuclease repair complex"/>
    <property type="evidence" value="ECO:0007669"/>
    <property type="project" value="InterPro"/>
</dbReference>
<dbReference type="GO" id="GO:0003677">
    <property type="term" value="F:DNA binding"/>
    <property type="evidence" value="ECO:0007669"/>
    <property type="project" value="UniProtKB-UniRule"/>
</dbReference>
<dbReference type="GO" id="GO:0009381">
    <property type="term" value="F:excinuclease ABC activity"/>
    <property type="evidence" value="ECO:0007669"/>
    <property type="project" value="UniProtKB-UniRule"/>
</dbReference>
<dbReference type="GO" id="GO:0006289">
    <property type="term" value="P:nucleotide-excision repair"/>
    <property type="evidence" value="ECO:0007669"/>
    <property type="project" value="UniProtKB-UniRule"/>
</dbReference>
<dbReference type="GO" id="GO:0009432">
    <property type="term" value="P:SOS response"/>
    <property type="evidence" value="ECO:0007669"/>
    <property type="project" value="UniProtKB-UniRule"/>
</dbReference>
<dbReference type="CDD" id="cd10434">
    <property type="entry name" value="GIY-YIG_UvrC_Cho"/>
    <property type="match status" value="1"/>
</dbReference>
<dbReference type="FunFam" id="3.30.420.340:FF:000002">
    <property type="entry name" value="UvrABC system protein C"/>
    <property type="match status" value="1"/>
</dbReference>
<dbReference type="FunFam" id="3.40.1440.10:FF:000001">
    <property type="entry name" value="UvrABC system protein C"/>
    <property type="match status" value="1"/>
</dbReference>
<dbReference type="FunFam" id="4.10.860.10:FF:000007">
    <property type="entry name" value="UvrABC system protein C"/>
    <property type="match status" value="1"/>
</dbReference>
<dbReference type="Gene3D" id="1.10.150.20">
    <property type="entry name" value="5' to 3' exonuclease, C-terminal subdomain"/>
    <property type="match status" value="1"/>
</dbReference>
<dbReference type="Gene3D" id="3.40.1440.10">
    <property type="entry name" value="GIY-YIG endonuclease"/>
    <property type="match status" value="1"/>
</dbReference>
<dbReference type="Gene3D" id="4.10.860.10">
    <property type="entry name" value="UVR domain"/>
    <property type="match status" value="1"/>
</dbReference>
<dbReference type="Gene3D" id="3.30.420.340">
    <property type="entry name" value="UvrC, RNAse H endonuclease domain"/>
    <property type="match status" value="1"/>
</dbReference>
<dbReference type="HAMAP" id="MF_00203">
    <property type="entry name" value="UvrC"/>
    <property type="match status" value="1"/>
</dbReference>
<dbReference type="InterPro" id="IPR000305">
    <property type="entry name" value="GIY-YIG_endonuc"/>
</dbReference>
<dbReference type="InterPro" id="IPR035901">
    <property type="entry name" value="GIY-YIG_endonuc_sf"/>
</dbReference>
<dbReference type="InterPro" id="IPR047296">
    <property type="entry name" value="GIY-YIG_UvrC_Cho"/>
</dbReference>
<dbReference type="InterPro" id="IPR010994">
    <property type="entry name" value="RuvA_2-like"/>
</dbReference>
<dbReference type="InterPro" id="IPR001943">
    <property type="entry name" value="UVR_dom"/>
</dbReference>
<dbReference type="InterPro" id="IPR036876">
    <property type="entry name" value="UVR_dom_sf"/>
</dbReference>
<dbReference type="InterPro" id="IPR050066">
    <property type="entry name" value="UvrABC_protein_C"/>
</dbReference>
<dbReference type="InterPro" id="IPR004791">
    <property type="entry name" value="UvrC"/>
</dbReference>
<dbReference type="InterPro" id="IPR001162">
    <property type="entry name" value="UvrC_RNase_H_dom"/>
</dbReference>
<dbReference type="InterPro" id="IPR038476">
    <property type="entry name" value="UvrC_RNase_H_dom_sf"/>
</dbReference>
<dbReference type="NCBIfam" id="TIGR00194">
    <property type="entry name" value="uvrC"/>
    <property type="match status" value="1"/>
</dbReference>
<dbReference type="PANTHER" id="PTHR30562:SF1">
    <property type="entry name" value="UVRABC SYSTEM PROTEIN C"/>
    <property type="match status" value="1"/>
</dbReference>
<dbReference type="PANTHER" id="PTHR30562">
    <property type="entry name" value="UVRC/OXIDOREDUCTASE"/>
    <property type="match status" value="1"/>
</dbReference>
<dbReference type="Pfam" id="PF01541">
    <property type="entry name" value="GIY-YIG"/>
    <property type="match status" value="1"/>
</dbReference>
<dbReference type="Pfam" id="PF02151">
    <property type="entry name" value="UVR"/>
    <property type="match status" value="1"/>
</dbReference>
<dbReference type="Pfam" id="PF22920">
    <property type="entry name" value="UvrC_RNaseH"/>
    <property type="match status" value="1"/>
</dbReference>
<dbReference type="Pfam" id="PF08459">
    <property type="entry name" value="UvrC_RNaseH_dom"/>
    <property type="match status" value="1"/>
</dbReference>
<dbReference type="SMART" id="SM00465">
    <property type="entry name" value="GIYc"/>
    <property type="match status" value="1"/>
</dbReference>
<dbReference type="SUPFAM" id="SSF46600">
    <property type="entry name" value="C-terminal UvrC-binding domain of UvrB"/>
    <property type="match status" value="1"/>
</dbReference>
<dbReference type="SUPFAM" id="SSF82771">
    <property type="entry name" value="GIY-YIG endonuclease"/>
    <property type="match status" value="1"/>
</dbReference>
<dbReference type="SUPFAM" id="SSF47781">
    <property type="entry name" value="RuvA domain 2-like"/>
    <property type="match status" value="1"/>
</dbReference>
<dbReference type="PROSITE" id="PS50164">
    <property type="entry name" value="GIY_YIG"/>
    <property type="match status" value="1"/>
</dbReference>
<dbReference type="PROSITE" id="PS50151">
    <property type="entry name" value="UVR"/>
    <property type="match status" value="1"/>
</dbReference>
<dbReference type="PROSITE" id="PS50165">
    <property type="entry name" value="UVRC"/>
    <property type="match status" value="1"/>
</dbReference>
<feature type="chain" id="PRO_0000138342" description="UvrABC system protein C">
    <location>
        <begin position="1"/>
        <end position="593"/>
    </location>
</feature>
<feature type="domain" description="GIY-YIG" evidence="1">
    <location>
        <begin position="17"/>
        <end position="94"/>
    </location>
</feature>
<feature type="domain" description="UVR" evidence="1">
    <location>
        <begin position="199"/>
        <end position="234"/>
    </location>
</feature>
<proteinExistence type="inferred from homology"/>
<gene>
    <name evidence="1" type="primary">uvrC</name>
    <name type="ordered locus">MW1029</name>
</gene>
<name>UVRC_STAAW</name>
<sequence>MEDYKQRIKNKLNVVPMEPGCYLMKDRNDQVIYVGKAKKLRNRLRSYFTGAHDAKTTRLVGEIRRFEFIVTSSETESLLLELNLIKQYQPRYNILLKDDKSYPFIKITKEKYPRLLVTRTVKQGTGKYFGPYPNAYSAQETKKLLDRIYPYRKCDKMPDKLCLYYHIGQCLGPCVYDVDLSKYAQMTKEITDFLNGEDKTILKSLEERMLTASESLDFERAKEYRDLIQHIQNLTNKQKIMSSDKTIRDVFGYSVDKGWMCIQVFFIRQGNMIKRDTTMIPLQQTEEEEFYTFIGQFYSLNQHILPKEVHVPRNLDKEMIQSVVDTKIVQPARGPKKDMVDLAAHNAKVSLNNKFELISRDESRTIKAIEELGTQMGIQTPIRIEAFDNSNIQGVDPVSAMVTFIDGKPDKKNYRKYKIKTVKGPDDYKSMREVVRRRYSRVLNEGLPLPDLIIVDGGKGHMNGVIDVLQNELGLDIPVAGLQKNDKHQTSELLYGASAEIVPLKKNSQAFYLLHRIQDEVHRFAITFHRQTRQKTGLKSILDDIDGIGNKRKTLLLRSFGSIKKMKEATLEDFKNIGIPENVAKNLHEQLHK</sequence>
<keyword id="KW-0963">Cytoplasm</keyword>
<keyword id="KW-0227">DNA damage</keyword>
<keyword id="KW-0228">DNA excision</keyword>
<keyword id="KW-0234">DNA repair</keyword>
<keyword id="KW-0267">Excision nuclease</keyword>
<keyword id="KW-0742">SOS response</keyword>
<evidence type="ECO:0000255" key="1">
    <source>
        <dbReference type="HAMAP-Rule" id="MF_00203"/>
    </source>
</evidence>